<comment type="function">
    <text evidence="1">Represses a number of genes involved in the response to DNA damage (SOS response), including recA and lexA. Binds to the 16 bp palindromic sequence 5'-CTGTATATATATACAG-3'. In the presence of single-stranded DNA, RecA interacts with LexA causing an autocatalytic cleavage which disrupts the DNA-binding part of LexA, leading to derepression of the SOS regulon and eventually DNA repair.</text>
</comment>
<comment type="catalytic activity">
    <reaction evidence="1">
        <text>Hydrolysis of Ala-|-Gly bond in repressor LexA.</text>
        <dbReference type="EC" id="3.4.21.88"/>
    </reaction>
</comment>
<comment type="subunit">
    <text evidence="1">Homodimer.</text>
</comment>
<comment type="similarity">
    <text evidence="1">Belongs to the peptidase S24 family.</text>
</comment>
<keyword id="KW-0068">Autocatalytic cleavage</keyword>
<keyword id="KW-0227">DNA damage</keyword>
<keyword id="KW-0234">DNA repair</keyword>
<keyword id="KW-0235">DNA replication</keyword>
<keyword id="KW-0238">DNA-binding</keyword>
<keyword id="KW-0378">Hydrolase</keyword>
<keyword id="KW-0678">Repressor</keyword>
<keyword id="KW-0742">SOS response</keyword>
<keyword id="KW-0804">Transcription</keyword>
<keyword id="KW-0805">Transcription regulation</keyword>
<gene>
    <name evidence="1" type="primary">lexA</name>
    <name type="ordered locus">ECP_4261</name>
</gene>
<proteinExistence type="inferred from homology"/>
<organism>
    <name type="scientific">Escherichia coli O6:K15:H31 (strain 536 / UPEC)</name>
    <dbReference type="NCBI Taxonomy" id="362663"/>
    <lineage>
        <taxon>Bacteria</taxon>
        <taxon>Pseudomonadati</taxon>
        <taxon>Pseudomonadota</taxon>
        <taxon>Gammaproteobacteria</taxon>
        <taxon>Enterobacterales</taxon>
        <taxon>Enterobacteriaceae</taxon>
        <taxon>Escherichia</taxon>
    </lineage>
</organism>
<sequence length="202" mass="22358">MKALTARQQEVFDLIRDHISQTGMPPTRAEIAQRLGFRSPNAAEEHLKALARKGVIEIVSGASRGIRLLQEEEEGLPLVGRVAAGEPLLAQQHIEGHYQVDPSLFKPNADFLLRVSGMSMKDIGIMDGDLLAVHKTQDVRNGQVVVARIDDEVTVKRLKKQGNKVELLPENSEFKPIVVDLRQQSFTIEGLAVGVIRNGDWL</sequence>
<feature type="chain" id="PRO_1000001282" description="LexA repressor">
    <location>
        <begin position="1"/>
        <end position="202"/>
    </location>
</feature>
<feature type="DNA-binding region" description="H-T-H motif" evidence="1">
    <location>
        <begin position="28"/>
        <end position="48"/>
    </location>
</feature>
<feature type="active site" description="For autocatalytic cleavage activity" evidence="1">
    <location>
        <position position="119"/>
    </location>
</feature>
<feature type="active site" description="For autocatalytic cleavage activity" evidence="1">
    <location>
        <position position="156"/>
    </location>
</feature>
<feature type="site" description="Cleavage; by autolysis" evidence="1">
    <location>
        <begin position="84"/>
        <end position="85"/>
    </location>
</feature>
<dbReference type="EC" id="3.4.21.88" evidence="1"/>
<dbReference type="EMBL" id="CP000247">
    <property type="protein sequence ID" value="ABG72209.1"/>
    <property type="molecule type" value="Genomic_DNA"/>
</dbReference>
<dbReference type="RefSeq" id="WP_000646078.1">
    <property type="nucleotide sequence ID" value="NC_008253.1"/>
</dbReference>
<dbReference type="SMR" id="Q0TA20"/>
<dbReference type="MEROPS" id="S24.001"/>
<dbReference type="GeneID" id="93777788"/>
<dbReference type="KEGG" id="ecp:ECP_4261"/>
<dbReference type="HOGENOM" id="CLU_066192_45_3_6"/>
<dbReference type="Proteomes" id="UP000009182">
    <property type="component" value="Chromosome"/>
</dbReference>
<dbReference type="GO" id="GO:0003677">
    <property type="term" value="F:DNA binding"/>
    <property type="evidence" value="ECO:0007669"/>
    <property type="project" value="UniProtKB-UniRule"/>
</dbReference>
<dbReference type="GO" id="GO:0004252">
    <property type="term" value="F:serine-type endopeptidase activity"/>
    <property type="evidence" value="ECO:0007669"/>
    <property type="project" value="UniProtKB-UniRule"/>
</dbReference>
<dbReference type="GO" id="GO:0006281">
    <property type="term" value="P:DNA repair"/>
    <property type="evidence" value="ECO:0007669"/>
    <property type="project" value="UniProtKB-UniRule"/>
</dbReference>
<dbReference type="GO" id="GO:0006260">
    <property type="term" value="P:DNA replication"/>
    <property type="evidence" value="ECO:0007669"/>
    <property type="project" value="UniProtKB-UniRule"/>
</dbReference>
<dbReference type="GO" id="GO:0045892">
    <property type="term" value="P:negative regulation of DNA-templated transcription"/>
    <property type="evidence" value="ECO:0007669"/>
    <property type="project" value="UniProtKB-UniRule"/>
</dbReference>
<dbReference type="GO" id="GO:0006508">
    <property type="term" value="P:proteolysis"/>
    <property type="evidence" value="ECO:0007669"/>
    <property type="project" value="InterPro"/>
</dbReference>
<dbReference type="GO" id="GO:0009432">
    <property type="term" value="P:SOS response"/>
    <property type="evidence" value="ECO:0007669"/>
    <property type="project" value="UniProtKB-UniRule"/>
</dbReference>
<dbReference type="CDD" id="cd06529">
    <property type="entry name" value="S24_LexA-like"/>
    <property type="match status" value="1"/>
</dbReference>
<dbReference type="FunFam" id="1.10.10.10:FF:000009">
    <property type="entry name" value="LexA repressor"/>
    <property type="match status" value="1"/>
</dbReference>
<dbReference type="FunFam" id="2.10.109.10:FF:000001">
    <property type="entry name" value="LexA repressor"/>
    <property type="match status" value="1"/>
</dbReference>
<dbReference type="Gene3D" id="2.10.109.10">
    <property type="entry name" value="Umud Fragment, subunit A"/>
    <property type="match status" value="1"/>
</dbReference>
<dbReference type="Gene3D" id="1.10.10.10">
    <property type="entry name" value="Winged helix-like DNA-binding domain superfamily/Winged helix DNA-binding domain"/>
    <property type="match status" value="1"/>
</dbReference>
<dbReference type="HAMAP" id="MF_00015">
    <property type="entry name" value="LexA"/>
    <property type="match status" value="1"/>
</dbReference>
<dbReference type="InterPro" id="IPR006200">
    <property type="entry name" value="LexA"/>
</dbReference>
<dbReference type="InterPro" id="IPR039418">
    <property type="entry name" value="LexA-like"/>
</dbReference>
<dbReference type="InterPro" id="IPR036286">
    <property type="entry name" value="LexA/Signal_pep-like_sf"/>
</dbReference>
<dbReference type="InterPro" id="IPR006199">
    <property type="entry name" value="LexA_DNA-bd_dom"/>
</dbReference>
<dbReference type="InterPro" id="IPR050077">
    <property type="entry name" value="LexA_repressor"/>
</dbReference>
<dbReference type="InterPro" id="IPR006197">
    <property type="entry name" value="Peptidase_S24_LexA"/>
</dbReference>
<dbReference type="InterPro" id="IPR015927">
    <property type="entry name" value="Peptidase_S24_S26A/B/C"/>
</dbReference>
<dbReference type="InterPro" id="IPR036388">
    <property type="entry name" value="WH-like_DNA-bd_sf"/>
</dbReference>
<dbReference type="InterPro" id="IPR036390">
    <property type="entry name" value="WH_DNA-bd_sf"/>
</dbReference>
<dbReference type="NCBIfam" id="TIGR00498">
    <property type="entry name" value="lexA"/>
    <property type="match status" value="1"/>
</dbReference>
<dbReference type="PANTHER" id="PTHR33516">
    <property type="entry name" value="LEXA REPRESSOR"/>
    <property type="match status" value="1"/>
</dbReference>
<dbReference type="PANTHER" id="PTHR33516:SF2">
    <property type="entry name" value="LEXA REPRESSOR-RELATED"/>
    <property type="match status" value="1"/>
</dbReference>
<dbReference type="Pfam" id="PF01726">
    <property type="entry name" value="LexA_DNA_bind"/>
    <property type="match status" value="1"/>
</dbReference>
<dbReference type="Pfam" id="PF00717">
    <property type="entry name" value="Peptidase_S24"/>
    <property type="match status" value="1"/>
</dbReference>
<dbReference type="PRINTS" id="PR00726">
    <property type="entry name" value="LEXASERPTASE"/>
</dbReference>
<dbReference type="SUPFAM" id="SSF51306">
    <property type="entry name" value="LexA/Signal peptidase"/>
    <property type="match status" value="1"/>
</dbReference>
<dbReference type="SUPFAM" id="SSF46785">
    <property type="entry name" value="Winged helix' DNA-binding domain"/>
    <property type="match status" value="1"/>
</dbReference>
<protein>
    <recommendedName>
        <fullName evidence="1">LexA repressor</fullName>
        <ecNumber evidence="1">3.4.21.88</ecNumber>
    </recommendedName>
</protein>
<evidence type="ECO:0000255" key="1">
    <source>
        <dbReference type="HAMAP-Rule" id="MF_00015"/>
    </source>
</evidence>
<accession>Q0TA20</accession>
<reference key="1">
    <citation type="journal article" date="2006" name="Mol. Microbiol.">
        <title>Role of pathogenicity island-associated integrases in the genome plasticity of uropathogenic Escherichia coli strain 536.</title>
        <authorList>
            <person name="Hochhut B."/>
            <person name="Wilde C."/>
            <person name="Balling G."/>
            <person name="Middendorf B."/>
            <person name="Dobrindt U."/>
            <person name="Brzuszkiewicz E."/>
            <person name="Gottschalk G."/>
            <person name="Carniel E."/>
            <person name="Hacker J."/>
        </authorList>
    </citation>
    <scope>NUCLEOTIDE SEQUENCE [LARGE SCALE GENOMIC DNA]</scope>
    <source>
        <strain>536 / UPEC</strain>
    </source>
</reference>
<name>LEXA_ECOL5</name>